<reference key="1">
    <citation type="journal article" date="2004" name="Nat. Genet.">
        <title>Comparison of genome degradation in Paratyphi A and Typhi, human-restricted serovars of Salmonella enterica that cause typhoid.</title>
        <authorList>
            <person name="McClelland M."/>
            <person name="Sanderson K.E."/>
            <person name="Clifton S.W."/>
            <person name="Latreille P."/>
            <person name="Porwollik S."/>
            <person name="Sabo A."/>
            <person name="Meyer R."/>
            <person name="Bieri T."/>
            <person name="Ozersky P."/>
            <person name="McLellan M."/>
            <person name="Harkins C.R."/>
            <person name="Wang C."/>
            <person name="Nguyen C."/>
            <person name="Berghoff A."/>
            <person name="Elliott G."/>
            <person name="Kohlberg S."/>
            <person name="Strong C."/>
            <person name="Du F."/>
            <person name="Carter J."/>
            <person name="Kremizki C."/>
            <person name="Layman D."/>
            <person name="Leonard S."/>
            <person name="Sun H."/>
            <person name="Fulton L."/>
            <person name="Nash W."/>
            <person name="Miner T."/>
            <person name="Minx P."/>
            <person name="Delehaunty K."/>
            <person name="Fronick C."/>
            <person name="Magrini V."/>
            <person name="Nhan M."/>
            <person name="Warren W."/>
            <person name="Florea L."/>
            <person name="Spieth J."/>
            <person name="Wilson R.K."/>
        </authorList>
    </citation>
    <scope>NUCLEOTIDE SEQUENCE [LARGE SCALE GENOMIC DNA]</scope>
    <source>
        <strain>ATCC 9150 / SARB42</strain>
    </source>
</reference>
<accession>Q5PDL8</accession>
<sequence length="166" mass="18354">MSKPLCSTGLRWLWLVVVVLIIDLGSKYLILQNFALGDTVGLFPSLNLHYARNYGAAFSFLADSGGWQRWFFAGIAIGICVILLVMMYRSKATQKLNNIAYALIIGGALGNLFDRLWHGFVVDMIDFYVGDWHFATFNLADTAICIGAALIVLEGFLPKPTAKEQA</sequence>
<organism>
    <name type="scientific">Salmonella paratyphi A (strain ATCC 9150 / SARB42)</name>
    <dbReference type="NCBI Taxonomy" id="295319"/>
    <lineage>
        <taxon>Bacteria</taxon>
        <taxon>Pseudomonadati</taxon>
        <taxon>Pseudomonadota</taxon>
        <taxon>Gammaproteobacteria</taxon>
        <taxon>Enterobacterales</taxon>
        <taxon>Enterobacteriaceae</taxon>
        <taxon>Salmonella</taxon>
    </lineage>
</organism>
<feature type="chain" id="PRO_0000289419" description="Lipoprotein signal peptidase">
    <location>
        <begin position="1"/>
        <end position="166"/>
    </location>
</feature>
<feature type="transmembrane region" description="Helical" evidence="1">
    <location>
        <begin position="12"/>
        <end position="32"/>
    </location>
</feature>
<feature type="transmembrane region" description="Helical" evidence="1">
    <location>
        <begin position="70"/>
        <end position="90"/>
    </location>
</feature>
<feature type="transmembrane region" description="Helical" evidence="1">
    <location>
        <begin position="102"/>
        <end position="122"/>
    </location>
</feature>
<feature type="transmembrane region" description="Helical" evidence="1">
    <location>
        <begin position="137"/>
        <end position="157"/>
    </location>
</feature>
<feature type="active site" evidence="1">
    <location>
        <position position="123"/>
    </location>
</feature>
<feature type="active site" evidence="1">
    <location>
        <position position="141"/>
    </location>
</feature>
<name>LSPA_SALPA</name>
<gene>
    <name evidence="1" type="primary">lspA</name>
    <name type="ordered locus">SPA0048</name>
</gene>
<evidence type="ECO:0000255" key="1">
    <source>
        <dbReference type="HAMAP-Rule" id="MF_00161"/>
    </source>
</evidence>
<keyword id="KW-0064">Aspartyl protease</keyword>
<keyword id="KW-0997">Cell inner membrane</keyword>
<keyword id="KW-1003">Cell membrane</keyword>
<keyword id="KW-0378">Hydrolase</keyword>
<keyword id="KW-0472">Membrane</keyword>
<keyword id="KW-0645">Protease</keyword>
<keyword id="KW-0812">Transmembrane</keyword>
<keyword id="KW-1133">Transmembrane helix</keyword>
<proteinExistence type="inferred from homology"/>
<comment type="function">
    <text evidence="1">This protein specifically catalyzes the removal of signal peptides from prolipoproteins.</text>
</comment>
<comment type="catalytic activity">
    <reaction evidence="1">
        <text>Release of signal peptides from bacterial membrane prolipoproteins. Hydrolyzes -Xaa-Yaa-Zaa-|-(S,diacylglyceryl)Cys-, in which Xaa is hydrophobic (preferably Leu), and Yaa (Ala or Ser) and Zaa (Gly or Ala) have small, neutral side chains.</text>
        <dbReference type="EC" id="3.4.23.36"/>
    </reaction>
</comment>
<comment type="pathway">
    <text evidence="1">Protein modification; lipoprotein biosynthesis (signal peptide cleavage).</text>
</comment>
<comment type="subcellular location">
    <subcellularLocation>
        <location evidence="1">Cell inner membrane</location>
        <topology evidence="1">Multi-pass membrane protein</topology>
    </subcellularLocation>
</comment>
<comment type="similarity">
    <text evidence="1">Belongs to the peptidase A8 family.</text>
</comment>
<protein>
    <recommendedName>
        <fullName evidence="1">Lipoprotein signal peptidase</fullName>
        <ecNumber evidence="1">3.4.23.36</ecNumber>
    </recommendedName>
    <alternativeName>
        <fullName evidence="1">Prolipoprotein signal peptidase</fullName>
    </alternativeName>
    <alternativeName>
        <fullName evidence="1">Signal peptidase II</fullName>
        <shortName evidence="1">SPase II</shortName>
    </alternativeName>
</protein>
<dbReference type="EC" id="3.4.23.36" evidence="1"/>
<dbReference type="EMBL" id="CP000026">
    <property type="protein sequence ID" value="AAV76083.1"/>
    <property type="molecule type" value="Genomic_DNA"/>
</dbReference>
<dbReference type="RefSeq" id="WP_000042738.1">
    <property type="nucleotide sequence ID" value="NC_006511.1"/>
</dbReference>
<dbReference type="SMR" id="Q5PDL8"/>
<dbReference type="MEROPS" id="A08.001"/>
<dbReference type="KEGG" id="spt:SPA0048"/>
<dbReference type="HOGENOM" id="CLU_083252_4_0_6"/>
<dbReference type="UniPathway" id="UPA00665"/>
<dbReference type="Proteomes" id="UP000008185">
    <property type="component" value="Chromosome"/>
</dbReference>
<dbReference type="GO" id="GO:0005886">
    <property type="term" value="C:plasma membrane"/>
    <property type="evidence" value="ECO:0007669"/>
    <property type="project" value="UniProtKB-SubCell"/>
</dbReference>
<dbReference type="GO" id="GO:0004190">
    <property type="term" value="F:aspartic-type endopeptidase activity"/>
    <property type="evidence" value="ECO:0007669"/>
    <property type="project" value="UniProtKB-UniRule"/>
</dbReference>
<dbReference type="GO" id="GO:0006508">
    <property type="term" value="P:proteolysis"/>
    <property type="evidence" value="ECO:0007669"/>
    <property type="project" value="UniProtKB-KW"/>
</dbReference>
<dbReference type="HAMAP" id="MF_00161">
    <property type="entry name" value="LspA"/>
    <property type="match status" value="1"/>
</dbReference>
<dbReference type="InterPro" id="IPR001872">
    <property type="entry name" value="Peptidase_A8"/>
</dbReference>
<dbReference type="NCBIfam" id="TIGR00077">
    <property type="entry name" value="lspA"/>
    <property type="match status" value="1"/>
</dbReference>
<dbReference type="PANTHER" id="PTHR33695">
    <property type="entry name" value="LIPOPROTEIN SIGNAL PEPTIDASE"/>
    <property type="match status" value="1"/>
</dbReference>
<dbReference type="PANTHER" id="PTHR33695:SF1">
    <property type="entry name" value="LIPOPROTEIN SIGNAL PEPTIDASE"/>
    <property type="match status" value="1"/>
</dbReference>
<dbReference type="Pfam" id="PF01252">
    <property type="entry name" value="Peptidase_A8"/>
    <property type="match status" value="1"/>
</dbReference>
<dbReference type="PRINTS" id="PR00781">
    <property type="entry name" value="LIPOSIGPTASE"/>
</dbReference>
<dbReference type="PROSITE" id="PS00855">
    <property type="entry name" value="SPASE_II"/>
    <property type="match status" value="1"/>
</dbReference>